<evidence type="ECO:0000255" key="1">
    <source>
        <dbReference type="HAMAP-Rule" id="MF_01147"/>
    </source>
</evidence>
<dbReference type="EC" id="2.5.1.145" evidence="1"/>
<dbReference type="EMBL" id="CP000527">
    <property type="protein sequence ID" value="ABM29959.1"/>
    <property type="molecule type" value="Genomic_DNA"/>
</dbReference>
<dbReference type="RefSeq" id="WP_011793193.1">
    <property type="nucleotide sequence ID" value="NC_008751.1"/>
</dbReference>
<dbReference type="SMR" id="A1VHP3"/>
<dbReference type="KEGG" id="dvl:Dvul_2948"/>
<dbReference type="HOGENOM" id="CLU_013386_1_0_7"/>
<dbReference type="UniPathway" id="UPA00664"/>
<dbReference type="Proteomes" id="UP000009173">
    <property type="component" value="Chromosome"/>
</dbReference>
<dbReference type="GO" id="GO:0005886">
    <property type="term" value="C:plasma membrane"/>
    <property type="evidence" value="ECO:0007669"/>
    <property type="project" value="UniProtKB-SubCell"/>
</dbReference>
<dbReference type="GO" id="GO:0008961">
    <property type="term" value="F:phosphatidylglycerol-prolipoprotein diacylglyceryl transferase activity"/>
    <property type="evidence" value="ECO:0007669"/>
    <property type="project" value="UniProtKB-UniRule"/>
</dbReference>
<dbReference type="GO" id="GO:0042158">
    <property type="term" value="P:lipoprotein biosynthetic process"/>
    <property type="evidence" value="ECO:0007669"/>
    <property type="project" value="UniProtKB-UniRule"/>
</dbReference>
<dbReference type="HAMAP" id="MF_01147">
    <property type="entry name" value="Lgt"/>
    <property type="match status" value="1"/>
</dbReference>
<dbReference type="InterPro" id="IPR001640">
    <property type="entry name" value="Lgt"/>
</dbReference>
<dbReference type="NCBIfam" id="TIGR00544">
    <property type="entry name" value="lgt"/>
    <property type="match status" value="1"/>
</dbReference>
<dbReference type="PANTHER" id="PTHR30589:SF0">
    <property type="entry name" value="PHOSPHATIDYLGLYCEROL--PROLIPOPROTEIN DIACYLGLYCERYL TRANSFERASE"/>
    <property type="match status" value="1"/>
</dbReference>
<dbReference type="PANTHER" id="PTHR30589">
    <property type="entry name" value="PROLIPOPROTEIN DIACYLGLYCERYL TRANSFERASE"/>
    <property type="match status" value="1"/>
</dbReference>
<dbReference type="Pfam" id="PF01790">
    <property type="entry name" value="LGT"/>
    <property type="match status" value="1"/>
</dbReference>
<dbReference type="PROSITE" id="PS01311">
    <property type="entry name" value="LGT"/>
    <property type="match status" value="1"/>
</dbReference>
<reference key="1">
    <citation type="journal article" date="2009" name="Environ. Microbiol.">
        <title>Contribution of mobile genetic elements to Desulfovibrio vulgaris genome plasticity.</title>
        <authorList>
            <person name="Walker C.B."/>
            <person name="Stolyar S."/>
            <person name="Chivian D."/>
            <person name="Pinel N."/>
            <person name="Gabster J.A."/>
            <person name="Dehal P.S."/>
            <person name="He Z."/>
            <person name="Yang Z.K."/>
            <person name="Yen H.C."/>
            <person name="Zhou J."/>
            <person name="Wall J.D."/>
            <person name="Hazen T.C."/>
            <person name="Arkin A.P."/>
            <person name="Stahl D.A."/>
        </authorList>
    </citation>
    <scope>NUCLEOTIDE SEQUENCE [LARGE SCALE GENOMIC DNA]</scope>
    <source>
        <strain>DP4</strain>
    </source>
</reference>
<feature type="chain" id="PRO_1000053423" description="Phosphatidylglycerol--prolipoprotein diacylglyceryl transferase">
    <location>
        <begin position="1"/>
        <end position="263"/>
    </location>
</feature>
<feature type="transmembrane region" description="Helical" evidence="1">
    <location>
        <begin position="10"/>
        <end position="30"/>
    </location>
</feature>
<feature type="transmembrane region" description="Helical" evidence="1">
    <location>
        <begin position="56"/>
        <end position="76"/>
    </location>
</feature>
<feature type="transmembrane region" description="Helical" evidence="1">
    <location>
        <begin position="91"/>
        <end position="111"/>
    </location>
</feature>
<feature type="transmembrane region" description="Helical" evidence="1">
    <location>
        <begin position="117"/>
        <end position="137"/>
    </location>
</feature>
<feature type="transmembrane region" description="Helical" evidence="1">
    <location>
        <begin position="171"/>
        <end position="191"/>
    </location>
</feature>
<feature type="transmembrane region" description="Helical" evidence="1">
    <location>
        <begin position="199"/>
        <end position="219"/>
    </location>
</feature>
<feature type="transmembrane region" description="Helical" evidence="1">
    <location>
        <begin position="231"/>
        <end position="251"/>
    </location>
</feature>
<feature type="binding site" evidence="1">
    <location>
        <position position="139"/>
    </location>
    <ligand>
        <name>a 1,2-diacyl-sn-glycero-3-phospho-(1'-sn-glycerol)</name>
        <dbReference type="ChEBI" id="CHEBI:64716"/>
    </ligand>
</feature>
<protein>
    <recommendedName>
        <fullName evidence="1">Phosphatidylglycerol--prolipoprotein diacylglyceryl transferase</fullName>
        <ecNumber evidence="1">2.5.1.145</ecNumber>
    </recommendedName>
</protein>
<accession>A1VHP3</accession>
<proteinExistence type="inferred from homology"/>
<name>LGT_NITV4</name>
<comment type="function">
    <text evidence="1">Catalyzes the transfer of the diacylglyceryl group from phosphatidylglycerol to the sulfhydryl group of the N-terminal cysteine of a prolipoprotein, the first step in the formation of mature lipoproteins.</text>
</comment>
<comment type="catalytic activity">
    <reaction evidence="1">
        <text>L-cysteinyl-[prolipoprotein] + a 1,2-diacyl-sn-glycero-3-phospho-(1'-sn-glycerol) = an S-1,2-diacyl-sn-glyceryl-L-cysteinyl-[prolipoprotein] + sn-glycerol 1-phosphate + H(+)</text>
        <dbReference type="Rhea" id="RHEA:56712"/>
        <dbReference type="Rhea" id="RHEA-COMP:14679"/>
        <dbReference type="Rhea" id="RHEA-COMP:14680"/>
        <dbReference type="ChEBI" id="CHEBI:15378"/>
        <dbReference type="ChEBI" id="CHEBI:29950"/>
        <dbReference type="ChEBI" id="CHEBI:57685"/>
        <dbReference type="ChEBI" id="CHEBI:64716"/>
        <dbReference type="ChEBI" id="CHEBI:140658"/>
        <dbReference type="EC" id="2.5.1.145"/>
    </reaction>
</comment>
<comment type="pathway">
    <text evidence="1">Protein modification; lipoprotein biosynthesis (diacylglyceryl transfer).</text>
</comment>
<comment type="subcellular location">
    <subcellularLocation>
        <location evidence="1">Cell inner membrane</location>
        <topology evidence="1">Multi-pass membrane protein</topology>
    </subcellularLocation>
</comment>
<comment type="similarity">
    <text evidence="1">Belongs to the Lgt family.</text>
</comment>
<organism>
    <name type="scientific">Nitratidesulfovibrio vulgaris (strain DP4)</name>
    <name type="common">Desulfovibrio vulgaris</name>
    <dbReference type="NCBI Taxonomy" id="391774"/>
    <lineage>
        <taxon>Bacteria</taxon>
        <taxon>Pseudomonadati</taxon>
        <taxon>Thermodesulfobacteriota</taxon>
        <taxon>Desulfovibrionia</taxon>
        <taxon>Desulfovibrionales</taxon>
        <taxon>Desulfovibrionaceae</taxon>
        <taxon>Nitratidesulfovibrio</taxon>
    </lineage>
</organism>
<sequence>MLTFPRIDPVAITLGPLQFRWYGLMYLFGFLSGWWLGRRRAAQPGSRWTGEMVDDMVTYVILGVVLGGRIGYILFYDLAYYLSNPTQIFSIWNGGMSFHGGLLGVVFAMWLLGRRNGLGFMDVSDFVAPLIPPGLFFGRIGNFINGELWGKHTTLPWGMVFPDGGPFPRHPSQLYECALEGVILFLALWVFSSRKRPTGHVSGLFALLYGVFRFTVEFVREPDVQLGYLAFGWLTMGQVLCLPLIMLGLWLLRPGGDKGTKAA</sequence>
<gene>
    <name evidence="1" type="primary">lgt</name>
    <name type="ordered locus">Dvul_2948</name>
</gene>
<keyword id="KW-0997">Cell inner membrane</keyword>
<keyword id="KW-1003">Cell membrane</keyword>
<keyword id="KW-0472">Membrane</keyword>
<keyword id="KW-0808">Transferase</keyword>
<keyword id="KW-0812">Transmembrane</keyword>
<keyword id="KW-1133">Transmembrane helix</keyword>